<comment type="function">
    <text evidence="2 4">Plays a key role in early steps of protein N-linked glycosylation by being involved in the conversion of polyprenol into dolichol (PubMed:20637498). Acts as a polyprenal reductase that mediates the reduction of polyprenal into dolichal in a NADP-dependent mechanism (By similarity). Dolichols are required for the synthesis of dolichol-linked monosaccharides and the oligosaccharide precursor used for N-glycosylation (PubMed:20637498). Also able to convert testosterone (T) into 5-alpha-dihydrotestosterone (DHT) (By similarity).</text>
</comment>
<comment type="catalytic activity">
    <reaction evidence="2">
        <text>a di-trans,poly-cis-dolichal + NADP(+) = a di-trans,poly-cis-polyprenal + NADPH + H(+)</text>
        <dbReference type="Rhea" id="RHEA:80727"/>
        <dbReference type="Rhea" id="RHEA-COMP:19536"/>
        <dbReference type="Rhea" id="RHEA-COMP:19537"/>
        <dbReference type="ChEBI" id="CHEBI:15378"/>
        <dbReference type="ChEBI" id="CHEBI:57783"/>
        <dbReference type="ChEBI" id="CHEBI:58349"/>
        <dbReference type="ChEBI" id="CHEBI:231623"/>
        <dbReference type="ChEBI" id="CHEBI:231637"/>
        <dbReference type="EC" id="1.3.1.94"/>
    </reaction>
    <physiologicalReaction direction="right-to-left" evidence="2">
        <dbReference type="Rhea" id="RHEA:80729"/>
    </physiologicalReaction>
</comment>
<comment type="catalytic activity">
    <reaction evidence="2">
        <text>a 3-oxo-5alpha-steroid + NADP(+) = a 3-oxo-Delta(4)-steroid + NADPH + H(+)</text>
        <dbReference type="Rhea" id="RHEA:54384"/>
        <dbReference type="ChEBI" id="CHEBI:13601"/>
        <dbReference type="ChEBI" id="CHEBI:15378"/>
        <dbReference type="ChEBI" id="CHEBI:47909"/>
        <dbReference type="ChEBI" id="CHEBI:57783"/>
        <dbReference type="ChEBI" id="CHEBI:58349"/>
        <dbReference type="EC" id="1.3.1.22"/>
    </reaction>
    <physiologicalReaction direction="right-to-left" evidence="2">
        <dbReference type="Rhea" id="RHEA:54386"/>
    </physiologicalReaction>
</comment>
<comment type="catalytic activity">
    <reaction evidence="2">
        <text>androst-4-ene-3,17-dione + NADPH + H(+) = 5alpha-androstan-3,17-dione + NADP(+)</text>
        <dbReference type="Rhea" id="RHEA:50816"/>
        <dbReference type="ChEBI" id="CHEBI:15378"/>
        <dbReference type="ChEBI" id="CHEBI:15994"/>
        <dbReference type="ChEBI" id="CHEBI:16422"/>
        <dbReference type="ChEBI" id="CHEBI:57783"/>
        <dbReference type="ChEBI" id="CHEBI:58349"/>
    </reaction>
    <physiologicalReaction direction="right-to-left" evidence="2">
        <dbReference type="Rhea" id="RHEA:50818"/>
    </physiologicalReaction>
</comment>
<comment type="catalytic activity">
    <reaction evidence="2">
        <text>17beta-hydroxy-5alpha-androstan-3-one + NADP(+) = testosterone + NADPH + H(+)</text>
        <dbReference type="Rhea" id="RHEA:50820"/>
        <dbReference type="ChEBI" id="CHEBI:15378"/>
        <dbReference type="ChEBI" id="CHEBI:16330"/>
        <dbReference type="ChEBI" id="CHEBI:17347"/>
        <dbReference type="ChEBI" id="CHEBI:57783"/>
        <dbReference type="ChEBI" id="CHEBI:58349"/>
        <dbReference type="EC" id="1.3.1.22"/>
    </reaction>
    <physiologicalReaction direction="right-to-left" evidence="2">
        <dbReference type="Rhea" id="RHEA:50822"/>
    </physiologicalReaction>
</comment>
<comment type="pathway">
    <text evidence="4">Protein modification; protein glycosylation.</text>
</comment>
<comment type="subcellular location">
    <subcellularLocation>
        <location evidence="1">Endoplasmic reticulum membrane</location>
        <topology evidence="1">Multi-pass membrane protein</topology>
    </subcellularLocation>
</comment>
<comment type="alternative products">
    <event type="alternative splicing"/>
    <isoform>
        <id>Q9WUP4-1</id>
        <name>1</name>
        <sequence type="displayed"/>
    </isoform>
    <isoform>
        <id>Q9WUP4-2</id>
        <name>2</name>
        <sequence type="described" ref="VSP_039779"/>
    </isoform>
</comment>
<comment type="disruption phenotype">
    <text evidence="4">Death by 12.5 dpc. At 10.5 dpc, embryos are smaller and fail to undergo axial rotation observed at 8.5 dpc in wild-types and present dilated hearts and open neural tubes.</text>
</comment>
<comment type="similarity">
    <text evidence="7">Belongs to the steroid 5-alpha reductase family. Polyprenal reductase subfamily.</text>
</comment>
<comment type="caution">
    <text evidence="2 4">Was initially characterized as a polyprenol reductase, mediating the conversion of polyprenol into dolichol (PubMed:20637498). However, it was later shown to catalyze an intermediate step in this pathway and reduce polyprenal (By similarity).</text>
</comment>
<protein>
    <recommendedName>
        <fullName evidence="7">Polyprenal reductase</fullName>
        <ecNumber evidence="2">1.3.1.94</ecNumber>
    </recommendedName>
    <alternativeName>
        <fullName>3-oxo-5-alpha-steroid 4-dehydrogenase 3</fullName>
        <ecNumber evidence="2">1.3.1.22</ecNumber>
    </alternativeName>
    <alternativeName>
        <fullName>Steroid 5-alpha-reductase 2-like</fullName>
    </alternativeName>
    <alternativeName>
        <fullName>Steroid 5-alpha-reductase 3</fullName>
        <shortName>S5AR 3</shortName>
        <shortName>SR type 3</shortName>
    </alternativeName>
</protein>
<organism>
    <name type="scientific">Mus musculus</name>
    <name type="common">Mouse</name>
    <dbReference type="NCBI Taxonomy" id="10090"/>
    <lineage>
        <taxon>Eukaryota</taxon>
        <taxon>Metazoa</taxon>
        <taxon>Chordata</taxon>
        <taxon>Craniata</taxon>
        <taxon>Vertebrata</taxon>
        <taxon>Euteleostomi</taxon>
        <taxon>Mammalia</taxon>
        <taxon>Eutheria</taxon>
        <taxon>Euarchontoglires</taxon>
        <taxon>Glires</taxon>
        <taxon>Rodentia</taxon>
        <taxon>Myomorpha</taxon>
        <taxon>Muroidea</taxon>
        <taxon>Muridae</taxon>
        <taxon>Murinae</taxon>
        <taxon>Mus</taxon>
        <taxon>Mus</taxon>
    </lineage>
</organism>
<evidence type="ECO:0000250" key="1">
    <source>
        <dbReference type="UniProtKB" id="Q5RJM1"/>
    </source>
</evidence>
<evidence type="ECO:0000250" key="2">
    <source>
        <dbReference type="UniProtKB" id="Q9H8P0"/>
    </source>
</evidence>
<evidence type="ECO:0000255" key="3"/>
<evidence type="ECO:0000269" key="4">
    <source>
    </source>
</evidence>
<evidence type="ECO:0000303" key="5">
    <source>
    </source>
</evidence>
<evidence type="ECO:0000303" key="6">
    <source>
    </source>
</evidence>
<evidence type="ECO:0000305" key="7"/>
<evidence type="ECO:0000312" key="8">
    <source>
        <dbReference type="MGI" id="MGI:1930252"/>
    </source>
</evidence>
<accession>Q9WUP4</accession>
<accession>D3YZB6</accession>
<accession>D3Z3J5</accession>
<accession>Q3UU82</accession>
<accession>Q8BGE3</accession>
<proteinExistence type="evidence at protein level"/>
<sequence length="330" mass="37936">MAGWAGFELSALNPLRTLWLALAAAFLFALLLQLAPARLLPSCALFQDLLRYGKTKQSGSRRPAVCRAFDVPKRYFSHFYVISVVWNGSLLWLLSQSLFLGAPFPNWLSALLRTLGATQFQALEMESKASRMPAAELALSAFLVLVFLWVHSLRRLFECFYVSVFSNAAIHVVQYCFGLVYYVLVGLTVLSQVPMDDKNVYVLGKNLLIQARWFHILGMVMFFWSSAHQYKCHVILSNLRRNKKGVVIHCQHRIPFGDWFEYVSSANYLAELMIYISMAVTFGLHNLTWWLVVTYVFSSQALSAFFNHKFYRSTFVSYPKHRKAFLPFLF</sequence>
<gene>
    <name evidence="6 8" type="primary">Srd5a3</name>
    <name type="synonym">Srd5a2l</name>
</gene>
<keyword id="KW-0025">Alternative splicing</keyword>
<keyword id="KW-0256">Endoplasmic reticulum</keyword>
<keyword id="KW-0443">Lipid metabolism</keyword>
<keyword id="KW-0472">Membrane</keyword>
<keyword id="KW-0521">NADP</keyword>
<keyword id="KW-0560">Oxidoreductase</keyword>
<keyword id="KW-1185">Reference proteome</keyword>
<keyword id="KW-0812">Transmembrane</keyword>
<keyword id="KW-1133">Transmembrane helix</keyword>
<name>SR5A3_MOUSE</name>
<dbReference type="EC" id="1.3.1.94" evidence="2"/>
<dbReference type="EC" id="1.3.1.22" evidence="2"/>
<dbReference type="EMBL" id="AF146793">
    <property type="protein sequence ID" value="AAD30567.1"/>
    <property type="molecule type" value="Genomic_DNA"/>
</dbReference>
<dbReference type="EMBL" id="AK040198">
    <property type="protein sequence ID" value="BAC30537.1"/>
    <property type="molecule type" value="mRNA"/>
</dbReference>
<dbReference type="EMBL" id="AK075635">
    <property type="protein sequence ID" value="BAC35871.1"/>
    <property type="molecule type" value="mRNA"/>
</dbReference>
<dbReference type="EMBL" id="AK138681">
    <property type="protein sequence ID" value="BAE23745.1"/>
    <property type="molecule type" value="mRNA"/>
</dbReference>
<dbReference type="EMBL" id="AK139290">
    <property type="protein sequence ID" value="BAE23944.1"/>
    <property type="molecule type" value="mRNA"/>
</dbReference>
<dbReference type="EMBL" id="AK162527">
    <property type="protein sequence ID" value="BAE36955.1"/>
    <property type="molecule type" value="mRNA"/>
</dbReference>
<dbReference type="EMBL" id="AC147239">
    <property type="status" value="NOT_ANNOTATED_CDS"/>
    <property type="molecule type" value="Genomic_DNA"/>
</dbReference>
<dbReference type="EMBL" id="BC145647">
    <property type="protein sequence ID" value="AAI45648.1"/>
    <property type="molecule type" value="mRNA"/>
</dbReference>
<dbReference type="CCDS" id="CCDS19358.1">
    <molecule id="Q9WUP4-1"/>
</dbReference>
<dbReference type="RefSeq" id="NP_065636.2">
    <molecule id="Q9WUP4-1"/>
    <property type="nucleotide sequence ID" value="NM_020611.4"/>
</dbReference>
<dbReference type="RefSeq" id="XP_036021276.1">
    <molecule id="Q9WUP4-2"/>
    <property type="nucleotide sequence ID" value="XM_036165383.1"/>
</dbReference>
<dbReference type="SMR" id="Q9WUP4"/>
<dbReference type="BioGRID" id="208270">
    <property type="interactions" value="2"/>
</dbReference>
<dbReference type="FunCoup" id="Q9WUP4">
    <property type="interactions" value="1212"/>
</dbReference>
<dbReference type="STRING" id="10090.ENSMUSP00000031143"/>
<dbReference type="iPTMnet" id="Q9WUP4"/>
<dbReference type="PhosphoSitePlus" id="Q9WUP4"/>
<dbReference type="SwissPalm" id="Q9WUP4"/>
<dbReference type="PaxDb" id="10090-ENSMUSP00000031143"/>
<dbReference type="PeptideAtlas" id="Q9WUP4"/>
<dbReference type="ProteomicsDB" id="289720">
    <molecule id="Q9WUP4-1"/>
</dbReference>
<dbReference type="ProteomicsDB" id="289721">
    <molecule id="Q9WUP4-2"/>
</dbReference>
<dbReference type="Pumba" id="Q9WUP4"/>
<dbReference type="DNASU" id="57357"/>
<dbReference type="Ensembl" id="ENSMUST00000031143.13">
    <molecule id="Q9WUP4-1"/>
    <property type="protein sequence ID" value="ENSMUSP00000031143.7"/>
    <property type="gene ID" value="ENSMUSG00000029233.16"/>
</dbReference>
<dbReference type="GeneID" id="57357"/>
<dbReference type="KEGG" id="mmu:57357"/>
<dbReference type="UCSC" id="uc008xun.2">
    <molecule id="Q9WUP4-2"/>
    <property type="organism name" value="mouse"/>
</dbReference>
<dbReference type="UCSC" id="uc008xuo.2">
    <molecule id="Q9WUP4-1"/>
    <property type="organism name" value="mouse"/>
</dbReference>
<dbReference type="AGR" id="MGI:1930252"/>
<dbReference type="CTD" id="79644"/>
<dbReference type="MGI" id="MGI:1930252">
    <property type="gene designation" value="Srd5a3"/>
</dbReference>
<dbReference type="VEuPathDB" id="HostDB:ENSMUSG00000029233"/>
<dbReference type="eggNOG" id="KOG1640">
    <property type="taxonomic scope" value="Eukaryota"/>
</dbReference>
<dbReference type="GeneTree" id="ENSGT00500000044920"/>
<dbReference type="HOGENOM" id="CLU_044409_2_1_1"/>
<dbReference type="InParanoid" id="Q9WUP4"/>
<dbReference type="OMA" id="RFYETNF"/>
<dbReference type="OrthoDB" id="541710at2759"/>
<dbReference type="PhylomeDB" id="Q9WUP4"/>
<dbReference type="TreeFam" id="TF315011"/>
<dbReference type="BRENDA" id="1.3.1.94">
    <property type="organism ID" value="3474"/>
</dbReference>
<dbReference type="Reactome" id="R-MMU-193048">
    <property type="pathway name" value="Androgen biosynthesis"/>
</dbReference>
<dbReference type="Reactome" id="R-MMU-446199">
    <property type="pathway name" value="Synthesis of Dolichyl-phosphate"/>
</dbReference>
<dbReference type="UniPathway" id="UPA00378"/>
<dbReference type="BioGRID-ORCS" id="57357">
    <property type="hits" value="9 hits in 78 CRISPR screens"/>
</dbReference>
<dbReference type="ChiTaRS" id="Srd5a3">
    <property type="organism name" value="mouse"/>
</dbReference>
<dbReference type="PRO" id="PR:Q9WUP4"/>
<dbReference type="Proteomes" id="UP000000589">
    <property type="component" value="Chromosome 5"/>
</dbReference>
<dbReference type="RNAct" id="Q9WUP4">
    <property type="molecule type" value="protein"/>
</dbReference>
<dbReference type="Bgee" id="ENSMUSG00000029233">
    <property type="expression patterns" value="Expressed in lumbar dorsal root ganglion and 235 other cell types or tissues"/>
</dbReference>
<dbReference type="ExpressionAtlas" id="Q9WUP4">
    <property type="expression patterns" value="baseline and differential"/>
</dbReference>
<dbReference type="GO" id="GO:0005783">
    <property type="term" value="C:endoplasmic reticulum"/>
    <property type="evidence" value="ECO:0000250"/>
    <property type="project" value="UniProtKB"/>
</dbReference>
<dbReference type="GO" id="GO:0005789">
    <property type="term" value="C:endoplasmic reticulum membrane"/>
    <property type="evidence" value="ECO:0007669"/>
    <property type="project" value="UniProtKB-SubCell"/>
</dbReference>
<dbReference type="GO" id="GO:0047751">
    <property type="term" value="F:3-oxo-5-alpha-steroid 4-dehydrogenase (NADP+) activity"/>
    <property type="evidence" value="ECO:0000250"/>
    <property type="project" value="UniProtKB"/>
</dbReference>
<dbReference type="GO" id="GO:0016628">
    <property type="term" value="F:oxidoreductase activity, acting on the CH-CH group of donors, NAD or NADP as acceptor"/>
    <property type="evidence" value="ECO:0000250"/>
    <property type="project" value="UniProtKB"/>
</dbReference>
<dbReference type="GO" id="GO:0160198">
    <property type="term" value="F:polyprenal reductase activity"/>
    <property type="evidence" value="ECO:0000250"/>
    <property type="project" value="UniProtKB"/>
</dbReference>
<dbReference type="GO" id="GO:0019408">
    <property type="term" value="P:dolichol biosynthetic process"/>
    <property type="evidence" value="ECO:0000250"/>
    <property type="project" value="UniProtKB"/>
</dbReference>
<dbReference type="GO" id="GO:0019348">
    <property type="term" value="P:dolichol metabolic process"/>
    <property type="evidence" value="ECO:0000315"/>
    <property type="project" value="UniProtKB"/>
</dbReference>
<dbReference type="GO" id="GO:0006488">
    <property type="term" value="P:dolichol-linked oligosaccharide biosynthetic process"/>
    <property type="evidence" value="ECO:0000315"/>
    <property type="project" value="UniProtKB"/>
</dbReference>
<dbReference type="GO" id="GO:0016095">
    <property type="term" value="P:polyprenol catabolic process"/>
    <property type="evidence" value="ECO:0000315"/>
    <property type="project" value="UniProtKB"/>
</dbReference>
<dbReference type="FunFam" id="1.20.120.1630:FF:000021">
    <property type="entry name" value="Polyprenol reductase 1"/>
    <property type="match status" value="1"/>
</dbReference>
<dbReference type="InterPro" id="IPR001104">
    <property type="entry name" value="3-oxo-5_a-steroid_4-DH_C"/>
</dbReference>
<dbReference type="InterPro" id="IPR039698">
    <property type="entry name" value="Dfg10/SRD5A3"/>
</dbReference>
<dbReference type="PANTHER" id="PTHR14624">
    <property type="entry name" value="DFG10 PROTEIN"/>
    <property type="match status" value="1"/>
</dbReference>
<dbReference type="PANTHER" id="PTHR14624:SF0">
    <property type="entry name" value="POLYPRENOL REDUCTASE"/>
    <property type="match status" value="1"/>
</dbReference>
<dbReference type="Pfam" id="PF02544">
    <property type="entry name" value="Steroid_dh"/>
    <property type="match status" value="1"/>
</dbReference>
<dbReference type="PROSITE" id="PS50244">
    <property type="entry name" value="S5A_REDUCTASE"/>
    <property type="match status" value="1"/>
</dbReference>
<reference key="1">
    <citation type="journal article" date="2000" name="Genome Res.">
        <title>The mouse Clock locus: sequence and comparative analysis of 204 kb from mouse chromosome 5.</title>
        <authorList>
            <person name="Wilsbacher L.D."/>
            <person name="Sangoram A.M."/>
            <person name="Antoch M.P."/>
            <person name="Takahashi J.S."/>
        </authorList>
    </citation>
    <scope>NUCLEOTIDE SEQUENCE [GENOMIC DNA]</scope>
    <source>
        <strain>129/Sv</strain>
    </source>
</reference>
<reference key="2">
    <citation type="journal article" date="2005" name="Science">
        <title>The transcriptional landscape of the mammalian genome.</title>
        <authorList>
            <person name="Carninci P."/>
            <person name="Kasukawa T."/>
            <person name="Katayama S."/>
            <person name="Gough J."/>
            <person name="Frith M.C."/>
            <person name="Maeda N."/>
            <person name="Oyama R."/>
            <person name="Ravasi T."/>
            <person name="Lenhard B."/>
            <person name="Wells C."/>
            <person name="Kodzius R."/>
            <person name="Shimokawa K."/>
            <person name="Bajic V.B."/>
            <person name="Brenner S.E."/>
            <person name="Batalov S."/>
            <person name="Forrest A.R."/>
            <person name="Zavolan M."/>
            <person name="Davis M.J."/>
            <person name="Wilming L.G."/>
            <person name="Aidinis V."/>
            <person name="Allen J.E."/>
            <person name="Ambesi-Impiombato A."/>
            <person name="Apweiler R."/>
            <person name="Aturaliya R.N."/>
            <person name="Bailey T.L."/>
            <person name="Bansal M."/>
            <person name="Baxter L."/>
            <person name="Beisel K.W."/>
            <person name="Bersano T."/>
            <person name="Bono H."/>
            <person name="Chalk A.M."/>
            <person name="Chiu K.P."/>
            <person name="Choudhary V."/>
            <person name="Christoffels A."/>
            <person name="Clutterbuck D.R."/>
            <person name="Crowe M.L."/>
            <person name="Dalla E."/>
            <person name="Dalrymple B.P."/>
            <person name="de Bono B."/>
            <person name="Della Gatta G."/>
            <person name="di Bernardo D."/>
            <person name="Down T."/>
            <person name="Engstrom P."/>
            <person name="Fagiolini M."/>
            <person name="Faulkner G."/>
            <person name="Fletcher C.F."/>
            <person name="Fukushima T."/>
            <person name="Furuno M."/>
            <person name="Futaki S."/>
            <person name="Gariboldi M."/>
            <person name="Georgii-Hemming P."/>
            <person name="Gingeras T.R."/>
            <person name="Gojobori T."/>
            <person name="Green R.E."/>
            <person name="Gustincich S."/>
            <person name="Harbers M."/>
            <person name="Hayashi Y."/>
            <person name="Hensch T.K."/>
            <person name="Hirokawa N."/>
            <person name="Hill D."/>
            <person name="Huminiecki L."/>
            <person name="Iacono M."/>
            <person name="Ikeo K."/>
            <person name="Iwama A."/>
            <person name="Ishikawa T."/>
            <person name="Jakt M."/>
            <person name="Kanapin A."/>
            <person name="Katoh M."/>
            <person name="Kawasawa Y."/>
            <person name="Kelso J."/>
            <person name="Kitamura H."/>
            <person name="Kitano H."/>
            <person name="Kollias G."/>
            <person name="Krishnan S.P."/>
            <person name="Kruger A."/>
            <person name="Kummerfeld S.K."/>
            <person name="Kurochkin I.V."/>
            <person name="Lareau L.F."/>
            <person name="Lazarevic D."/>
            <person name="Lipovich L."/>
            <person name="Liu J."/>
            <person name="Liuni S."/>
            <person name="McWilliam S."/>
            <person name="Madan Babu M."/>
            <person name="Madera M."/>
            <person name="Marchionni L."/>
            <person name="Matsuda H."/>
            <person name="Matsuzawa S."/>
            <person name="Miki H."/>
            <person name="Mignone F."/>
            <person name="Miyake S."/>
            <person name="Morris K."/>
            <person name="Mottagui-Tabar S."/>
            <person name="Mulder N."/>
            <person name="Nakano N."/>
            <person name="Nakauchi H."/>
            <person name="Ng P."/>
            <person name="Nilsson R."/>
            <person name="Nishiguchi S."/>
            <person name="Nishikawa S."/>
            <person name="Nori F."/>
            <person name="Ohara O."/>
            <person name="Okazaki Y."/>
            <person name="Orlando V."/>
            <person name="Pang K.C."/>
            <person name="Pavan W.J."/>
            <person name="Pavesi G."/>
            <person name="Pesole G."/>
            <person name="Petrovsky N."/>
            <person name="Piazza S."/>
            <person name="Reed J."/>
            <person name="Reid J.F."/>
            <person name="Ring B.Z."/>
            <person name="Ringwald M."/>
            <person name="Rost B."/>
            <person name="Ruan Y."/>
            <person name="Salzberg S.L."/>
            <person name="Sandelin A."/>
            <person name="Schneider C."/>
            <person name="Schoenbach C."/>
            <person name="Sekiguchi K."/>
            <person name="Semple C.A."/>
            <person name="Seno S."/>
            <person name="Sessa L."/>
            <person name="Sheng Y."/>
            <person name="Shibata Y."/>
            <person name="Shimada H."/>
            <person name="Shimada K."/>
            <person name="Silva D."/>
            <person name="Sinclair B."/>
            <person name="Sperling S."/>
            <person name="Stupka E."/>
            <person name="Sugiura K."/>
            <person name="Sultana R."/>
            <person name="Takenaka Y."/>
            <person name="Taki K."/>
            <person name="Tammoja K."/>
            <person name="Tan S.L."/>
            <person name="Tang S."/>
            <person name="Taylor M.S."/>
            <person name="Tegner J."/>
            <person name="Teichmann S.A."/>
            <person name="Ueda H.R."/>
            <person name="van Nimwegen E."/>
            <person name="Verardo R."/>
            <person name="Wei C.L."/>
            <person name="Yagi K."/>
            <person name="Yamanishi H."/>
            <person name="Zabarovsky E."/>
            <person name="Zhu S."/>
            <person name="Zimmer A."/>
            <person name="Hide W."/>
            <person name="Bult C."/>
            <person name="Grimmond S.M."/>
            <person name="Teasdale R.D."/>
            <person name="Liu E.T."/>
            <person name="Brusic V."/>
            <person name="Quackenbush J."/>
            <person name="Wahlestedt C."/>
            <person name="Mattick J.S."/>
            <person name="Hume D.A."/>
            <person name="Kai C."/>
            <person name="Sasaki D."/>
            <person name="Tomaru Y."/>
            <person name="Fukuda S."/>
            <person name="Kanamori-Katayama M."/>
            <person name="Suzuki M."/>
            <person name="Aoki J."/>
            <person name="Arakawa T."/>
            <person name="Iida J."/>
            <person name="Imamura K."/>
            <person name="Itoh M."/>
            <person name="Kato T."/>
            <person name="Kawaji H."/>
            <person name="Kawagashira N."/>
            <person name="Kawashima T."/>
            <person name="Kojima M."/>
            <person name="Kondo S."/>
            <person name="Konno H."/>
            <person name="Nakano K."/>
            <person name="Ninomiya N."/>
            <person name="Nishio T."/>
            <person name="Okada M."/>
            <person name="Plessy C."/>
            <person name="Shibata K."/>
            <person name="Shiraki T."/>
            <person name="Suzuki S."/>
            <person name="Tagami M."/>
            <person name="Waki K."/>
            <person name="Watahiki A."/>
            <person name="Okamura-Oho Y."/>
            <person name="Suzuki H."/>
            <person name="Kawai J."/>
            <person name="Hayashizaki Y."/>
        </authorList>
    </citation>
    <scope>NUCLEOTIDE SEQUENCE [LARGE SCALE MRNA] (ISOFORMS 1 AND 2)</scope>
    <source>
        <strain>C57BL/6J</strain>
        <tissue>Cerebellum</tissue>
        <tissue>Thymus</tissue>
        <tissue>Urinary bladder</tissue>
    </source>
</reference>
<reference key="3">
    <citation type="journal article" date="2009" name="PLoS Biol.">
        <title>Lineage-specific biology revealed by a finished genome assembly of the mouse.</title>
        <authorList>
            <person name="Church D.M."/>
            <person name="Goodstadt L."/>
            <person name="Hillier L.W."/>
            <person name="Zody M.C."/>
            <person name="Goldstein S."/>
            <person name="She X."/>
            <person name="Bult C.J."/>
            <person name="Agarwala R."/>
            <person name="Cherry J.L."/>
            <person name="DiCuccio M."/>
            <person name="Hlavina W."/>
            <person name="Kapustin Y."/>
            <person name="Meric P."/>
            <person name="Maglott D."/>
            <person name="Birtle Z."/>
            <person name="Marques A.C."/>
            <person name="Graves T."/>
            <person name="Zhou S."/>
            <person name="Teague B."/>
            <person name="Potamousis K."/>
            <person name="Churas C."/>
            <person name="Place M."/>
            <person name="Herschleb J."/>
            <person name="Runnheim R."/>
            <person name="Forrest D."/>
            <person name="Amos-Landgraf J."/>
            <person name="Schwartz D.C."/>
            <person name="Cheng Z."/>
            <person name="Lindblad-Toh K."/>
            <person name="Eichler E.E."/>
            <person name="Ponting C.P."/>
        </authorList>
    </citation>
    <scope>NUCLEOTIDE SEQUENCE [LARGE SCALE GENOMIC DNA]</scope>
    <source>
        <strain>C57BL/6J</strain>
    </source>
</reference>
<reference key="4">
    <citation type="journal article" date="2004" name="Genome Res.">
        <title>The status, quality, and expansion of the NIH full-length cDNA project: the Mammalian Gene Collection (MGC).</title>
        <authorList>
            <consortium name="The MGC Project Team"/>
        </authorList>
    </citation>
    <scope>NUCLEOTIDE SEQUENCE [LARGE SCALE MRNA] (ISOFORM 1)</scope>
    <source>
        <tissue>Brain</tissue>
    </source>
</reference>
<reference key="5">
    <citation type="journal article" date="2010" name="Cell">
        <title>SRD5A3 is required for converting polyprenol to dolichol and is mutated in a congenital glycosylation disorder.</title>
        <authorList>
            <person name="Cantagrel V."/>
            <person name="Lefeber D.J."/>
            <person name="Ng B.G."/>
            <person name="Guan Z."/>
            <person name="Silhavy J.L."/>
            <person name="Bielas S.L."/>
            <person name="Lehle L."/>
            <person name="Hombauer H."/>
            <person name="Adamowicz M."/>
            <person name="Swiezewska E."/>
            <person name="De Brouwer A.P."/>
            <person name="Blumel P."/>
            <person name="Sykut-Cegielska J."/>
            <person name="Houliston S."/>
            <person name="Swistun D."/>
            <person name="Ali B.R."/>
            <person name="Dobyns W.B."/>
            <person name="Babovic-Vuksanovic D."/>
            <person name="van Bokhoven H."/>
            <person name="Wevers R.A."/>
            <person name="Raetz C.R."/>
            <person name="Freeze H.H."/>
            <person name="Morava E."/>
            <person name="Al-Gazali L."/>
            <person name="Gleeson J.G."/>
        </authorList>
    </citation>
    <scope>FUNCTION</scope>
    <scope>PATHWAY</scope>
    <scope>DISRUPTION PHENOTYPE</scope>
</reference>
<reference key="6">
    <citation type="journal article" date="2010" name="Cell">
        <title>A tissue-specific atlas of mouse protein phosphorylation and expression.</title>
        <authorList>
            <person name="Huttlin E.L."/>
            <person name="Jedrychowski M.P."/>
            <person name="Elias J.E."/>
            <person name="Goswami T."/>
            <person name="Rad R."/>
            <person name="Beausoleil S.A."/>
            <person name="Villen J."/>
            <person name="Haas W."/>
            <person name="Sowa M.E."/>
            <person name="Gygi S.P."/>
        </authorList>
    </citation>
    <scope>IDENTIFICATION BY MASS SPECTROMETRY [LARGE SCALE ANALYSIS]</scope>
    <source>
        <tissue>Kidney</tissue>
        <tissue>Lung</tissue>
        <tissue>Spleen</tissue>
    </source>
</reference>
<feature type="chain" id="PRO_0000317704" description="Polyprenal reductase">
    <location>
        <begin position="1"/>
        <end position="330"/>
    </location>
</feature>
<feature type="topological domain" description="Cytoplasmic" evidence="3">
    <location>
        <begin position="1"/>
        <end position="16"/>
    </location>
</feature>
<feature type="transmembrane region" description="Helical" evidence="3">
    <location>
        <begin position="17"/>
        <end position="37"/>
    </location>
</feature>
<feature type="topological domain" description="Lumenal" evidence="3">
    <location>
        <begin position="38"/>
        <end position="80"/>
    </location>
</feature>
<feature type="transmembrane region" description="Helical" evidence="3">
    <location>
        <begin position="81"/>
        <end position="101"/>
    </location>
</feature>
<feature type="topological domain" description="Cytoplasmic" evidence="3">
    <location>
        <begin position="102"/>
        <end position="132"/>
    </location>
</feature>
<feature type="transmembrane region" description="Helical" evidence="3">
    <location>
        <begin position="133"/>
        <end position="153"/>
    </location>
</feature>
<feature type="topological domain" description="Lumenal" evidence="3">
    <location>
        <begin position="154"/>
        <end position="169"/>
    </location>
</feature>
<feature type="transmembrane region" description="Helical" evidence="3">
    <location>
        <begin position="170"/>
        <end position="190"/>
    </location>
</feature>
<feature type="topological domain" description="Cytoplasmic" evidence="3">
    <location>
        <begin position="191"/>
        <end position="206"/>
    </location>
</feature>
<feature type="transmembrane region" description="Helical" evidence="3">
    <location>
        <begin position="207"/>
        <end position="227"/>
    </location>
</feature>
<feature type="topological domain" description="Lumenal" evidence="3">
    <location>
        <begin position="228"/>
        <end position="277"/>
    </location>
</feature>
<feature type="transmembrane region" description="Helical" evidence="3">
    <location>
        <begin position="278"/>
        <end position="298"/>
    </location>
</feature>
<feature type="topological domain" description="Cytoplasmic" evidence="3">
    <location>
        <begin position="299"/>
        <end position="330"/>
    </location>
</feature>
<feature type="splice variant" id="VSP_039779" description="In isoform 2." evidence="5">
    <original>VYVLGKNLLIQARWFHILGMVMFFWSSAHQYKCHVILSNLRRNKKGVVIHCQHRIPFGDWFEYVSSANYLAELMIYISMAVTFGLHNLTWWLVVTYVFSSQALSAFFNHKFYRSTFVSYPKHRKAFLPFLF</original>
    <variation>GKWPCQ</variation>
    <location>
        <begin position="200"/>
        <end position="330"/>
    </location>
</feature>
<feature type="sequence conflict" description="In Ref. 1; AAD30567 and 4; AAI45648." evidence="7" ref="1 4">
    <original>S</original>
    <variation>G</variation>
    <location>
        <position position="109"/>
    </location>
</feature>
<feature type="sequence conflict" description="In Ref. 1; AAD30567 and 4; AAI45648." evidence="7" ref="1 4">
    <original>S</original>
    <variation>F</variation>
    <location>
        <position position="298"/>
    </location>
</feature>